<keyword id="KW-0071">Autoinducer synthesis</keyword>
<keyword id="KW-0408">Iron</keyword>
<keyword id="KW-0456">Lyase</keyword>
<keyword id="KW-0479">Metal-binding</keyword>
<keyword id="KW-0673">Quorum sensing</keyword>
<name>LUXS_SALCH</name>
<gene>
    <name evidence="1" type="primary">luxS</name>
    <name type="ordered locus">SCH_2752</name>
</gene>
<protein>
    <recommendedName>
        <fullName evidence="1">S-ribosylhomocysteine lyase</fullName>
        <ecNumber evidence="1">4.4.1.21</ecNumber>
    </recommendedName>
    <alternativeName>
        <fullName evidence="1">AI-2 synthesis protein</fullName>
    </alternativeName>
    <alternativeName>
        <fullName evidence="1">Autoinducer-2 production protein LuxS</fullName>
    </alternativeName>
</protein>
<comment type="function">
    <text evidence="1">Involved in the synthesis of autoinducer 2 (AI-2) which is secreted by bacteria and is used to communicate both the cell density and the metabolic potential of the environment. The regulation of gene expression in response to changes in cell density is called quorum sensing. Catalyzes the transformation of S-ribosylhomocysteine (RHC) to homocysteine (HC) and 4,5-dihydroxy-2,3-pentadione (DPD).</text>
</comment>
<comment type="catalytic activity">
    <reaction evidence="1">
        <text>S-(5-deoxy-D-ribos-5-yl)-L-homocysteine = (S)-4,5-dihydroxypentane-2,3-dione + L-homocysteine</text>
        <dbReference type="Rhea" id="RHEA:17753"/>
        <dbReference type="ChEBI" id="CHEBI:29484"/>
        <dbReference type="ChEBI" id="CHEBI:58195"/>
        <dbReference type="ChEBI" id="CHEBI:58199"/>
        <dbReference type="EC" id="4.4.1.21"/>
    </reaction>
</comment>
<comment type="cofactor">
    <cofactor evidence="1">
        <name>Fe cation</name>
        <dbReference type="ChEBI" id="CHEBI:24875"/>
    </cofactor>
    <text evidence="1">Binds 1 Fe cation per subunit.</text>
</comment>
<comment type="subunit">
    <text evidence="1">Homodimer.</text>
</comment>
<comment type="similarity">
    <text evidence="1">Belongs to the LuxS family.</text>
</comment>
<proteinExistence type="inferred from homology"/>
<sequence>MPLLDSFAVDHTRMQAPAVRVAKTMNTPHGDAITVFDLRFCIPNKEVMPEKGIHTLEHLFAGFMRDHLNGNGVEIIDISPMGCRTGFYMSLIGTPDEQRVADAWKAAMADVLKVQDQNQIPELNVYQCGTYQMHSLSEAQDIARHILERDVRVNSNKELALPKEKLQELHI</sequence>
<evidence type="ECO:0000255" key="1">
    <source>
        <dbReference type="HAMAP-Rule" id="MF_00091"/>
    </source>
</evidence>
<organism>
    <name type="scientific">Salmonella choleraesuis (strain SC-B67)</name>
    <dbReference type="NCBI Taxonomy" id="321314"/>
    <lineage>
        <taxon>Bacteria</taxon>
        <taxon>Pseudomonadati</taxon>
        <taxon>Pseudomonadota</taxon>
        <taxon>Gammaproteobacteria</taxon>
        <taxon>Enterobacterales</taxon>
        <taxon>Enterobacteriaceae</taxon>
        <taxon>Salmonella</taxon>
    </lineage>
</organism>
<feature type="chain" id="PRO_0000298021" description="S-ribosylhomocysteine lyase">
    <location>
        <begin position="1"/>
        <end position="171"/>
    </location>
</feature>
<feature type="binding site" evidence="1">
    <location>
        <position position="54"/>
    </location>
    <ligand>
        <name>Fe cation</name>
        <dbReference type="ChEBI" id="CHEBI:24875"/>
    </ligand>
</feature>
<feature type="binding site" evidence="1">
    <location>
        <position position="58"/>
    </location>
    <ligand>
        <name>Fe cation</name>
        <dbReference type="ChEBI" id="CHEBI:24875"/>
    </ligand>
</feature>
<feature type="binding site" evidence="1">
    <location>
        <position position="128"/>
    </location>
    <ligand>
        <name>Fe cation</name>
        <dbReference type="ChEBI" id="CHEBI:24875"/>
    </ligand>
</feature>
<accession>Q57KV4</accession>
<reference key="1">
    <citation type="journal article" date="2005" name="Nucleic Acids Res.">
        <title>The genome sequence of Salmonella enterica serovar Choleraesuis, a highly invasive and resistant zoonotic pathogen.</title>
        <authorList>
            <person name="Chiu C.-H."/>
            <person name="Tang P."/>
            <person name="Chu C."/>
            <person name="Hu S."/>
            <person name="Bao Q."/>
            <person name="Yu J."/>
            <person name="Chou Y.-Y."/>
            <person name="Wang H.-S."/>
            <person name="Lee Y.-S."/>
        </authorList>
    </citation>
    <scope>NUCLEOTIDE SEQUENCE [LARGE SCALE GENOMIC DNA]</scope>
    <source>
        <strain>SC-B67</strain>
    </source>
</reference>
<dbReference type="EC" id="4.4.1.21" evidence="1"/>
<dbReference type="EMBL" id="AE017220">
    <property type="protein sequence ID" value="AAX66658.1"/>
    <property type="molecule type" value="Genomic_DNA"/>
</dbReference>
<dbReference type="RefSeq" id="WP_001130194.1">
    <property type="nucleotide sequence ID" value="NC_006905.1"/>
</dbReference>
<dbReference type="SMR" id="Q57KV4"/>
<dbReference type="KEGG" id="sec:SCH_2752"/>
<dbReference type="HOGENOM" id="CLU_107531_2_0_6"/>
<dbReference type="Proteomes" id="UP000000538">
    <property type="component" value="Chromosome"/>
</dbReference>
<dbReference type="GO" id="GO:0005506">
    <property type="term" value="F:iron ion binding"/>
    <property type="evidence" value="ECO:0007669"/>
    <property type="project" value="InterPro"/>
</dbReference>
<dbReference type="GO" id="GO:0043768">
    <property type="term" value="F:S-ribosylhomocysteine lyase activity"/>
    <property type="evidence" value="ECO:0007669"/>
    <property type="project" value="UniProtKB-UniRule"/>
</dbReference>
<dbReference type="GO" id="GO:0009372">
    <property type="term" value="P:quorum sensing"/>
    <property type="evidence" value="ECO:0007669"/>
    <property type="project" value="UniProtKB-UniRule"/>
</dbReference>
<dbReference type="FunFam" id="3.30.1360.80:FF:000001">
    <property type="entry name" value="S-ribosylhomocysteine lyase"/>
    <property type="match status" value="1"/>
</dbReference>
<dbReference type="Gene3D" id="3.30.1360.80">
    <property type="entry name" value="S-ribosylhomocysteinase (LuxS)"/>
    <property type="match status" value="1"/>
</dbReference>
<dbReference type="HAMAP" id="MF_00091">
    <property type="entry name" value="LuxS"/>
    <property type="match status" value="1"/>
</dbReference>
<dbReference type="InterPro" id="IPR037005">
    <property type="entry name" value="LuxS_sf"/>
</dbReference>
<dbReference type="InterPro" id="IPR011249">
    <property type="entry name" value="Metalloenz_LuxS/M16"/>
</dbReference>
<dbReference type="InterPro" id="IPR003815">
    <property type="entry name" value="S-ribosylhomocysteinase"/>
</dbReference>
<dbReference type="NCBIfam" id="NF002602">
    <property type="entry name" value="PRK02260.1-2"/>
    <property type="match status" value="1"/>
</dbReference>
<dbReference type="PANTHER" id="PTHR35799">
    <property type="entry name" value="S-RIBOSYLHOMOCYSTEINE LYASE"/>
    <property type="match status" value="1"/>
</dbReference>
<dbReference type="PANTHER" id="PTHR35799:SF1">
    <property type="entry name" value="S-RIBOSYLHOMOCYSTEINE LYASE"/>
    <property type="match status" value="1"/>
</dbReference>
<dbReference type="Pfam" id="PF02664">
    <property type="entry name" value="LuxS"/>
    <property type="match status" value="1"/>
</dbReference>
<dbReference type="PIRSF" id="PIRSF006160">
    <property type="entry name" value="AI2"/>
    <property type="match status" value="1"/>
</dbReference>
<dbReference type="PRINTS" id="PR01487">
    <property type="entry name" value="LUXSPROTEIN"/>
</dbReference>
<dbReference type="SUPFAM" id="SSF63411">
    <property type="entry name" value="LuxS/MPP-like metallohydrolase"/>
    <property type="match status" value="1"/>
</dbReference>